<comment type="function">
    <text evidence="1">Involved in the gluconeogenesis. Catalyzes stereospecifically the conversion of dihydroxyacetone phosphate (DHAP) to D-glyceraldehyde-3-phosphate (G3P).</text>
</comment>
<comment type="catalytic activity">
    <reaction evidence="1">
        <text>D-glyceraldehyde 3-phosphate = dihydroxyacetone phosphate</text>
        <dbReference type="Rhea" id="RHEA:18585"/>
        <dbReference type="ChEBI" id="CHEBI:57642"/>
        <dbReference type="ChEBI" id="CHEBI:59776"/>
        <dbReference type="EC" id="5.3.1.1"/>
    </reaction>
</comment>
<comment type="pathway">
    <text evidence="1">Carbohydrate biosynthesis; gluconeogenesis.</text>
</comment>
<comment type="pathway">
    <text evidence="1">Carbohydrate degradation; glycolysis; D-glyceraldehyde 3-phosphate from glycerone phosphate: step 1/1.</text>
</comment>
<comment type="subunit">
    <text evidence="1">Homodimer.</text>
</comment>
<comment type="subcellular location">
    <subcellularLocation>
        <location evidence="1">Cytoplasm</location>
    </subcellularLocation>
</comment>
<comment type="similarity">
    <text evidence="1">Belongs to the triosephosphate isomerase family.</text>
</comment>
<reference key="1">
    <citation type="journal article" date="2008" name="PLoS ONE">
        <title>Genome sequence of the saprophyte Leptospira biflexa provides insights into the evolution of Leptospira and the pathogenesis of leptospirosis.</title>
        <authorList>
            <person name="Picardeau M."/>
            <person name="Bulach D.M."/>
            <person name="Bouchier C."/>
            <person name="Zuerner R.L."/>
            <person name="Zidane N."/>
            <person name="Wilson P.J."/>
            <person name="Creno S."/>
            <person name="Kuczek E.S."/>
            <person name="Bommezzadri S."/>
            <person name="Davis J.C."/>
            <person name="McGrath A."/>
            <person name="Johnson M.J."/>
            <person name="Boursaux-Eude C."/>
            <person name="Seemann T."/>
            <person name="Rouy Z."/>
            <person name="Coppel R.L."/>
            <person name="Rood J.I."/>
            <person name="Lajus A."/>
            <person name="Davies J.K."/>
            <person name="Medigue C."/>
            <person name="Adler B."/>
        </authorList>
    </citation>
    <scope>NUCLEOTIDE SEQUENCE [LARGE SCALE GENOMIC DNA]</scope>
    <source>
        <strain>Patoc 1 / ATCC 23582 / Paris</strain>
    </source>
</reference>
<organism>
    <name type="scientific">Leptospira biflexa serovar Patoc (strain Patoc 1 / ATCC 23582 / Paris)</name>
    <dbReference type="NCBI Taxonomy" id="456481"/>
    <lineage>
        <taxon>Bacteria</taxon>
        <taxon>Pseudomonadati</taxon>
        <taxon>Spirochaetota</taxon>
        <taxon>Spirochaetia</taxon>
        <taxon>Leptospirales</taxon>
        <taxon>Leptospiraceae</taxon>
        <taxon>Leptospira</taxon>
    </lineage>
</organism>
<name>TPIS_LEPBP</name>
<feature type="chain" id="PRO_1000096509" description="Triosephosphate isomerase">
    <location>
        <begin position="1"/>
        <end position="249"/>
    </location>
</feature>
<feature type="active site" description="Electrophile" evidence="1">
    <location>
        <position position="94"/>
    </location>
</feature>
<feature type="active site" description="Proton acceptor" evidence="1">
    <location>
        <position position="166"/>
    </location>
</feature>
<feature type="binding site" evidence="1">
    <location>
        <begin position="9"/>
        <end position="11"/>
    </location>
    <ligand>
        <name>substrate</name>
    </ligand>
</feature>
<feature type="binding site" evidence="1">
    <location>
        <position position="172"/>
    </location>
    <ligand>
        <name>substrate</name>
    </ligand>
</feature>
<feature type="binding site" evidence="1">
    <location>
        <position position="214"/>
    </location>
    <ligand>
        <name>substrate</name>
    </ligand>
</feature>
<feature type="binding site" evidence="1">
    <location>
        <begin position="235"/>
        <end position="236"/>
    </location>
    <ligand>
        <name>substrate</name>
    </ligand>
</feature>
<proteinExistence type="inferred from homology"/>
<gene>
    <name evidence="1" type="primary">tpiA</name>
    <name type="ordered locus">LEPBI_I2082</name>
</gene>
<keyword id="KW-0963">Cytoplasm</keyword>
<keyword id="KW-0312">Gluconeogenesis</keyword>
<keyword id="KW-0324">Glycolysis</keyword>
<keyword id="KW-0413">Isomerase</keyword>
<keyword id="KW-1185">Reference proteome</keyword>
<protein>
    <recommendedName>
        <fullName evidence="1">Triosephosphate isomerase</fullName>
        <shortName evidence="1">TIM</shortName>
        <shortName evidence="1">TPI</shortName>
        <ecNumber evidence="1">5.3.1.1</ecNumber>
    </recommendedName>
    <alternativeName>
        <fullName evidence="1">Triose-phosphate isomerase</fullName>
    </alternativeName>
</protein>
<evidence type="ECO:0000255" key="1">
    <source>
        <dbReference type="HAMAP-Rule" id="MF_00147"/>
    </source>
</evidence>
<dbReference type="EC" id="5.3.1.1" evidence="1"/>
<dbReference type="EMBL" id="CP000786">
    <property type="protein sequence ID" value="ABZ98184.1"/>
    <property type="molecule type" value="Genomic_DNA"/>
</dbReference>
<dbReference type="RefSeq" id="WP_012389054.1">
    <property type="nucleotide sequence ID" value="NC_010602.1"/>
</dbReference>
<dbReference type="SMR" id="B0SSU4"/>
<dbReference type="STRING" id="456481.LEPBI_I2082"/>
<dbReference type="KEGG" id="lbi:LEPBI_I2082"/>
<dbReference type="HOGENOM" id="CLU_024251_2_1_12"/>
<dbReference type="OrthoDB" id="9809429at2"/>
<dbReference type="BioCyc" id="LBIF456481:LEPBI_RS10285-MONOMER"/>
<dbReference type="UniPathway" id="UPA00109">
    <property type="reaction ID" value="UER00189"/>
</dbReference>
<dbReference type="UniPathway" id="UPA00138"/>
<dbReference type="Proteomes" id="UP000001847">
    <property type="component" value="Chromosome I"/>
</dbReference>
<dbReference type="GO" id="GO:0005829">
    <property type="term" value="C:cytosol"/>
    <property type="evidence" value="ECO:0007669"/>
    <property type="project" value="TreeGrafter"/>
</dbReference>
<dbReference type="GO" id="GO:0004807">
    <property type="term" value="F:triose-phosphate isomerase activity"/>
    <property type="evidence" value="ECO:0007669"/>
    <property type="project" value="UniProtKB-UniRule"/>
</dbReference>
<dbReference type="GO" id="GO:0006094">
    <property type="term" value="P:gluconeogenesis"/>
    <property type="evidence" value="ECO:0007669"/>
    <property type="project" value="UniProtKB-UniRule"/>
</dbReference>
<dbReference type="GO" id="GO:0046166">
    <property type="term" value="P:glyceraldehyde-3-phosphate biosynthetic process"/>
    <property type="evidence" value="ECO:0007669"/>
    <property type="project" value="TreeGrafter"/>
</dbReference>
<dbReference type="GO" id="GO:0019563">
    <property type="term" value="P:glycerol catabolic process"/>
    <property type="evidence" value="ECO:0007669"/>
    <property type="project" value="TreeGrafter"/>
</dbReference>
<dbReference type="GO" id="GO:0006096">
    <property type="term" value="P:glycolytic process"/>
    <property type="evidence" value="ECO:0007669"/>
    <property type="project" value="UniProtKB-UniRule"/>
</dbReference>
<dbReference type="CDD" id="cd00311">
    <property type="entry name" value="TIM"/>
    <property type="match status" value="1"/>
</dbReference>
<dbReference type="FunFam" id="3.20.20.70:FF:000016">
    <property type="entry name" value="Triosephosphate isomerase"/>
    <property type="match status" value="1"/>
</dbReference>
<dbReference type="Gene3D" id="3.20.20.70">
    <property type="entry name" value="Aldolase class I"/>
    <property type="match status" value="1"/>
</dbReference>
<dbReference type="HAMAP" id="MF_00147_B">
    <property type="entry name" value="TIM_B"/>
    <property type="match status" value="1"/>
</dbReference>
<dbReference type="InterPro" id="IPR013785">
    <property type="entry name" value="Aldolase_TIM"/>
</dbReference>
<dbReference type="InterPro" id="IPR035990">
    <property type="entry name" value="TIM_sf"/>
</dbReference>
<dbReference type="InterPro" id="IPR022896">
    <property type="entry name" value="TrioseP_Isoase_bac/euk"/>
</dbReference>
<dbReference type="InterPro" id="IPR000652">
    <property type="entry name" value="Triosephosphate_isomerase"/>
</dbReference>
<dbReference type="InterPro" id="IPR020861">
    <property type="entry name" value="Triosephosphate_isomerase_AS"/>
</dbReference>
<dbReference type="NCBIfam" id="TIGR00419">
    <property type="entry name" value="tim"/>
    <property type="match status" value="1"/>
</dbReference>
<dbReference type="PANTHER" id="PTHR21139">
    <property type="entry name" value="TRIOSEPHOSPHATE ISOMERASE"/>
    <property type="match status" value="1"/>
</dbReference>
<dbReference type="PANTHER" id="PTHR21139:SF42">
    <property type="entry name" value="TRIOSEPHOSPHATE ISOMERASE"/>
    <property type="match status" value="1"/>
</dbReference>
<dbReference type="Pfam" id="PF00121">
    <property type="entry name" value="TIM"/>
    <property type="match status" value="1"/>
</dbReference>
<dbReference type="SUPFAM" id="SSF51351">
    <property type="entry name" value="Triosephosphate isomerase (TIM)"/>
    <property type="match status" value="1"/>
</dbReference>
<dbReference type="PROSITE" id="PS00171">
    <property type="entry name" value="TIM_1"/>
    <property type="match status" value="1"/>
</dbReference>
<dbReference type="PROSITE" id="PS51440">
    <property type="entry name" value="TIM_2"/>
    <property type="match status" value="1"/>
</dbReference>
<accession>B0SSU4</accession>
<sequence>MRKKIIAGNWKMNLTLAEAKEITKGLLSACDSSSYEIMVFPSALHLESVASIARDSQLIVGAQNAYQSGLTAMTGEISPVQLAELGIQTVLVGHSERRQFLGETSEFDNTKISYFLKHGLRVVYCVGETWAEREKGNTFSVLEDQIGKGLKGITSDLFKNLVIAYEPVWAIGTGKVATPVEAEEAHAFIRKEIGKLFVGADLVAENIQILYGGSVKPDNIKELLAKPNIDGGLVGGASQKLDLFLGLLK</sequence>